<accession>A1RP78</accession>
<organism>
    <name type="scientific">Shewanella sp. (strain W3-18-1)</name>
    <dbReference type="NCBI Taxonomy" id="351745"/>
    <lineage>
        <taxon>Bacteria</taxon>
        <taxon>Pseudomonadati</taxon>
        <taxon>Pseudomonadota</taxon>
        <taxon>Gammaproteobacteria</taxon>
        <taxon>Alteromonadales</taxon>
        <taxon>Shewanellaceae</taxon>
        <taxon>Shewanella</taxon>
    </lineage>
</organism>
<feature type="chain" id="PRO_1000056302" description="Ubiquinone/menaquinone biosynthesis C-methyltransferase UbiE">
    <location>
        <begin position="1"/>
        <end position="251"/>
    </location>
</feature>
<feature type="binding site" evidence="1">
    <location>
        <position position="74"/>
    </location>
    <ligand>
        <name>S-adenosyl-L-methionine</name>
        <dbReference type="ChEBI" id="CHEBI:59789"/>
    </ligand>
</feature>
<feature type="binding site" evidence="1">
    <location>
        <position position="95"/>
    </location>
    <ligand>
        <name>S-adenosyl-L-methionine</name>
        <dbReference type="ChEBI" id="CHEBI:59789"/>
    </ligand>
</feature>
<feature type="binding site" evidence="1">
    <location>
        <begin position="123"/>
        <end position="124"/>
    </location>
    <ligand>
        <name>S-adenosyl-L-methionine</name>
        <dbReference type="ChEBI" id="CHEBI:59789"/>
    </ligand>
</feature>
<proteinExistence type="inferred from homology"/>
<sequence length="251" mass="28067">MSEGESKSTHFGYKTVEADKKAELVAGVFHSVAAKYDIMNDVMSFGIHRFWKRHTIEVSGARPGMKVLDLAGGTGDLTAKFSHLVGDKGEVVLADINDSMLKVGRTKLRDKGIVNNVSYVQANAEALPFPDNHFDIITIAFGLRNVTDKDAALRSMNRVLKPGGKLLVLEFSKPQHEIMRKVYDLYSFKVLPKMGELITKDADSYEYLAESIRMHPDQDTLKQMMVDAGFEQVDYTNMTDGIVALHRGYKF</sequence>
<evidence type="ECO:0000255" key="1">
    <source>
        <dbReference type="HAMAP-Rule" id="MF_01813"/>
    </source>
</evidence>
<dbReference type="EC" id="2.1.1.163" evidence="1"/>
<dbReference type="EC" id="2.1.1.201" evidence="1"/>
<dbReference type="EMBL" id="CP000503">
    <property type="protein sequence ID" value="ABM26473.1"/>
    <property type="molecule type" value="Genomic_DNA"/>
</dbReference>
<dbReference type="RefSeq" id="WP_011790904.1">
    <property type="nucleotide sequence ID" value="NC_008750.1"/>
</dbReference>
<dbReference type="SMR" id="A1RP78"/>
<dbReference type="GeneID" id="67441972"/>
<dbReference type="KEGG" id="shw:Sputw3181_3664"/>
<dbReference type="HOGENOM" id="CLU_037990_0_0_6"/>
<dbReference type="UniPathway" id="UPA00079">
    <property type="reaction ID" value="UER00169"/>
</dbReference>
<dbReference type="UniPathway" id="UPA00232"/>
<dbReference type="Proteomes" id="UP000002597">
    <property type="component" value="Chromosome"/>
</dbReference>
<dbReference type="GO" id="GO:0008425">
    <property type="term" value="F:2-methoxy-6-polyprenyl-1,4-benzoquinol methyltransferase activity"/>
    <property type="evidence" value="ECO:0007669"/>
    <property type="project" value="UniProtKB-UniRule"/>
</dbReference>
<dbReference type="GO" id="GO:0043770">
    <property type="term" value="F:demethylmenaquinone methyltransferase activity"/>
    <property type="evidence" value="ECO:0007669"/>
    <property type="project" value="UniProtKB-UniRule"/>
</dbReference>
<dbReference type="GO" id="GO:0009060">
    <property type="term" value="P:aerobic respiration"/>
    <property type="evidence" value="ECO:0007669"/>
    <property type="project" value="UniProtKB-UniRule"/>
</dbReference>
<dbReference type="GO" id="GO:0009234">
    <property type="term" value="P:menaquinone biosynthetic process"/>
    <property type="evidence" value="ECO:0007669"/>
    <property type="project" value="UniProtKB-UniRule"/>
</dbReference>
<dbReference type="GO" id="GO:0032259">
    <property type="term" value="P:methylation"/>
    <property type="evidence" value="ECO:0007669"/>
    <property type="project" value="UniProtKB-KW"/>
</dbReference>
<dbReference type="CDD" id="cd02440">
    <property type="entry name" value="AdoMet_MTases"/>
    <property type="match status" value="1"/>
</dbReference>
<dbReference type="FunFam" id="3.40.50.150:FF:000014">
    <property type="entry name" value="Ubiquinone/menaquinone biosynthesis C-methyltransferase UbiE"/>
    <property type="match status" value="1"/>
</dbReference>
<dbReference type="Gene3D" id="3.40.50.150">
    <property type="entry name" value="Vaccinia Virus protein VP39"/>
    <property type="match status" value="1"/>
</dbReference>
<dbReference type="HAMAP" id="MF_01813">
    <property type="entry name" value="MenG_UbiE_methyltr"/>
    <property type="match status" value="1"/>
</dbReference>
<dbReference type="InterPro" id="IPR029063">
    <property type="entry name" value="SAM-dependent_MTases_sf"/>
</dbReference>
<dbReference type="InterPro" id="IPR004033">
    <property type="entry name" value="UbiE/COQ5_MeTrFase"/>
</dbReference>
<dbReference type="InterPro" id="IPR023576">
    <property type="entry name" value="UbiE/COQ5_MeTrFase_CS"/>
</dbReference>
<dbReference type="NCBIfam" id="TIGR01934">
    <property type="entry name" value="MenG_MenH_UbiE"/>
    <property type="match status" value="1"/>
</dbReference>
<dbReference type="NCBIfam" id="NF001240">
    <property type="entry name" value="PRK00216.1-1"/>
    <property type="match status" value="1"/>
</dbReference>
<dbReference type="NCBIfam" id="NF001242">
    <property type="entry name" value="PRK00216.1-3"/>
    <property type="match status" value="1"/>
</dbReference>
<dbReference type="NCBIfam" id="NF001244">
    <property type="entry name" value="PRK00216.1-5"/>
    <property type="match status" value="1"/>
</dbReference>
<dbReference type="PANTHER" id="PTHR43591:SF24">
    <property type="entry name" value="2-METHOXY-6-POLYPRENYL-1,4-BENZOQUINOL METHYLASE, MITOCHONDRIAL"/>
    <property type="match status" value="1"/>
</dbReference>
<dbReference type="PANTHER" id="PTHR43591">
    <property type="entry name" value="METHYLTRANSFERASE"/>
    <property type="match status" value="1"/>
</dbReference>
<dbReference type="Pfam" id="PF01209">
    <property type="entry name" value="Ubie_methyltran"/>
    <property type="match status" value="1"/>
</dbReference>
<dbReference type="SUPFAM" id="SSF53335">
    <property type="entry name" value="S-adenosyl-L-methionine-dependent methyltransferases"/>
    <property type="match status" value="1"/>
</dbReference>
<dbReference type="PROSITE" id="PS51608">
    <property type="entry name" value="SAM_MT_UBIE"/>
    <property type="match status" value="1"/>
</dbReference>
<dbReference type="PROSITE" id="PS01183">
    <property type="entry name" value="UBIE_1"/>
    <property type="match status" value="1"/>
</dbReference>
<dbReference type="PROSITE" id="PS01184">
    <property type="entry name" value="UBIE_2"/>
    <property type="match status" value="1"/>
</dbReference>
<gene>
    <name evidence="1" type="primary">ubiE</name>
    <name type="ordered locus">Sputw3181_3664</name>
</gene>
<protein>
    <recommendedName>
        <fullName evidence="1">Ubiquinone/menaquinone biosynthesis C-methyltransferase UbiE</fullName>
        <ecNumber evidence="1">2.1.1.163</ecNumber>
        <ecNumber evidence="1">2.1.1.201</ecNumber>
    </recommendedName>
    <alternativeName>
        <fullName evidence="1">2-methoxy-6-polyprenyl-1,4-benzoquinol methylase</fullName>
    </alternativeName>
    <alternativeName>
        <fullName evidence="1">Demethylmenaquinone methyltransferase</fullName>
    </alternativeName>
</protein>
<name>UBIE_SHESW</name>
<reference key="1">
    <citation type="submission" date="2006-12" db="EMBL/GenBank/DDBJ databases">
        <title>Complete sequence of Shewanella sp. W3-18-1.</title>
        <authorList>
            <consortium name="US DOE Joint Genome Institute"/>
            <person name="Copeland A."/>
            <person name="Lucas S."/>
            <person name="Lapidus A."/>
            <person name="Barry K."/>
            <person name="Detter J.C."/>
            <person name="Glavina del Rio T."/>
            <person name="Hammon N."/>
            <person name="Israni S."/>
            <person name="Dalin E."/>
            <person name="Tice H."/>
            <person name="Pitluck S."/>
            <person name="Chain P."/>
            <person name="Malfatti S."/>
            <person name="Shin M."/>
            <person name="Vergez L."/>
            <person name="Schmutz J."/>
            <person name="Larimer F."/>
            <person name="Land M."/>
            <person name="Hauser L."/>
            <person name="Kyrpides N."/>
            <person name="Lykidis A."/>
            <person name="Tiedje J."/>
            <person name="Richardson P."/>
        </authorList>
    </citation>
    <scope>NUCLEOTIDE SEQUENCE [LARGE SCALE GENOMIC DNA]</scope>
    <source>
        <strain>W3-18-1</strain>
    </source>
</reference>
<comment type="function">
    <text evidence="1">Methyltransferase required for the conversion of demethylmenaquinol (DMKH2) to menaquinol (MKH2) and the conversion of 2-polyprenyl-6-methoxy-1,4-benzoquinol (DDMQH2) to 2-polyprenyl-3-methyl-6-methoxy-1,4-benzoquinol (DMQH2).</text>
</comment>
<comment type="catalytic activity">
    <reaction evidence="1">
        <text>a 2-demethylmenaquinol + S-adenosyl-L-methionine = a menaquinol + S-adenosyl-L-homocysteine + H(+)</text>
        <dbReference type="Rhea" id="RHEA:42640"/>
        <dbReference type="Rhea" id="RHEA-COMP:9539"/>
        <dbReference type="Rhea" id="RHEA-COMP:9563"/>
        <dbReference type="ChEBI" id="CHEBI:15378"/>
        <dbReference type="ChEBI" id="CHEBI:18151"/>
        <dbReference type="ChEBI" id="CHEBI:55437"/>
        <dbReference type="ChEBI" id="CHEBI:57856"/>
        <dbReference type="ChEBI" id="CHEBI:59789"/>
        <dbReference type="EC" id="2.1.1.163"/>
    </reaction>
</comment>
<comment type="catalytic activity">
    <reaction evidence="1">
        <text>a 2-methoxy-6-(all-trans-polyprenyl)benzene-1,4-diol + S-adenosyl-L-methionine = a 5-methoxy-2-methyl-3-(all-trans-polyprenyl)benzene-1,4-diol + S-adenosyl-L-homocysteine + H(+)</text>
        <dbReference type="Rhea" id="RHEA:28286"/>
        <dbReference type="Rhea" id="RHEA-COMP:10858"/>
        <dbReference type="Rhea" id="RHEA-COMP:10859"/>
        <dbReference type="ChEBI" id="CHEBI:15378"/>
        <dbReference type="ChEBI" id="CHEBI:57856"/>
        <dbReference type="ChEBI" id="CHEBI:59789"/>
        <dbReference type="ChEBI" id="CHEBI:84166"/>
        <dbReference type="ChEBI" id="CHEBI:84167"/>
        <dbReference type="EC" id="2.1.1.201"/>
    </reaction>
</comment>
<comment type="pathway">
    <text evidence="1">Quinol/quinone metabolism; menaquinone biosynthesis; menaquinol from 1,4-dihydroxy-2-naphthoate: step 2/2.</text>
</comment>
<comment type="pathway">
    <text evidence="1">Cofactor biosynthesis; ubiquinone biosynthesis.</text>
</comment>
<comment type="similarity">
    <text evidence="1">Belongs to the class I-like SAM-binding methyltransferase superfamily. MenG/UbiE family.</text>
</comment>
<keyword id="KW-0474">Menaquinone biosynthesis</keyword>
<keyword id="KW-0489">Methyltransferase</keyword>
<keyword id="KW-0949">S-adenosyl-L-methionine</keyword>
<keyword id="KW-0808">Transferase</keyword>
<keyword id="KW-0831">Ubiquinone biosynthesis</keyword>